<proteinExistence type="inferred from homology"/>
<name>NTPPA_STAMF</name>
<sequence length="207" mass="23442">MKILVLASSSQRRIELLRKLGADFIVIPPRITERIYDDPAKTVLENAFSKANYALVYAPENSIIIGMDTVIFSHELGVIGKPTTIEEATHILKLLRGKWHSVYTGVYIIEKNNLKYKSFIEETRVKMRNFSDEELTLYISSLEPLMKAGGYAIQGLGALLIETIVGDYYNVVGIPITKLYITLKKYFGVDLLREAVRKRVVGKTRTI</sequence>
<feature type="chain" id="PRO_1000060964" description="dTTP/UTP pyrophosphatase">
    <location>
        <begin position="1"/>
        <end position="207"/>
    </location>
</feature>
<feature type="active site" description="Proton acceptor" evidence="1">
    <location>
        <position position="68"/>
    </location>
</feature>
<feature type="site" description="Important for substrate specificity" evidence="1">
    <location>
        <position position="12"/>
    </location>
</feature>
<feature type="site" description="Important for substrate specificity" evidence="1">
    <location>
        <position position="69"/>
    </location>
</feature>
<feature type="site" description="Important for substrate specificity" evidence="1">
    <location>
        <position position="154"/>
    </location>
</feature>
<accession>A3DMH6</accession>
<evidence type="ECO:0000255" key="1">
    <source>
        <dbReference type="HAMAP-Rule" id="MF_00528"/>
    </source>
</evidence>
<reference key="1">
    <citation type="journal article" date="2009" name="BMC Genomics">
        <title>The complete genome sequence of Staphylothermus marinus reveals differences in sulfur metabolism among heterotrophic Crenarchaeota.</title>
        <authorList>
            <person name="Anderson I.J."/>
            <person name="Dharmarajan L."/>
            <person name="Rodriguez J."/>
            <person name="Hooper S."/>
            <person name="Porat I."/>
            <person name="Ulrich L.E."/>
            <person name="Elkins J.G."/>
            <person name="Mavromatis K."/>
            <person name="Sun H."/>
            <person name="Land M."/>
            <person name="Lapidus A."/>
            <person name="Lucas S."/>
            <person name="Barry K."/>
            <person name="Huber H."/>
            <person name="Zhulin I.B."/>
            <person name="Whitman W.B."/>
            <person name="Mukhopadhyay B."/>
            <person name="Woese C."/>
            <person name="Bristow J."/>
            <person name="Kyrpides N."/>
        </authorList>
    </citation>
    <scope>NUCLEOTIDE SEQUENCE [LARGE SCALE GENOMIC DNA]</scope>
    <source>
        <strain>ATCC 43588 / DSM 3639 / JCM 9404 / F1</strain>
    </source>
</reference>
<reference key="2">
    <citation type="journal article" date="2009" name="Stand. Genomic Sci.">
        <title>Complete genome sequence of Staphylothermus marinus Stetter and Fiala 1986 type strain F1.</title>
        <authorList>
            <person name="Anderson I.J."/>
            <person name="Sun H."/>
            <person name="Lapidus A."/>
            <person name="Copeland A."/>
            <person name="Glavina Del Rio T."/>
            <person name="Tice H."/>
            <person name="Dalin E."/>
            <person name="Lucas S."/>
            <person name="Barry K."/>
            <person name="Land M."/>
            <person name="Richardson P."/>
            <person name="Huber H."/>
            <person name="Kyrpides N.C."/>
        </authorList>
    </citation>
    <scope>NUCLEOTIDE SEQUENCE [LARGE SCALE GENOMIC DNA]</scope>
    <source>
        <strain>ATCC 43588 / DSM 3639 / JCM 9404 / F1</strain>
    </source>
</reference>
<dbReference type="EC" id="3.6.1.9" evidence="1"/>
<dbReference type="EMBL" id="CP000575">
    <property type="protein sequence ID" value="ABN69836.1"/>
    <property type="molecule type" value="Genomic_DNA"/>
</dbReference>
<dbReference type="RefSeq" id="WP_011839027.1">
    <property type="nucleotide sequence ID" value="NC_009033.1"/>
</dbReference>
<dbReference type="SMR" id="A3DMH6"/>
<dbReference type="STRING" id="399550.Smar_0734"/>
<dbReference type="GeneID" id="4907008"/>
<dbReference type="KEGG" id="smr:Smar_0734"/>
<dbReference type="eggNOG" id="arCOG05007">
    <property type="taxonomic scope" value="Archaea"/>
</dbReference>
<dbReference type="HOGENOM" id="CLU_040416_0_0_2"/>
<dbReference type="OrthoDB" id="45223at2157"/>
<dbReference type="Proteomes" id="UP000000254">
    <property type="component" value="Chromosome"/>
</dbReference>
<dbReference type="GO" id="GO:0005737">
    <property type="term" value="C:cytoplasm"/>
    <property type="evidence" value="ECO:0007669"/>
    <property type="project" value="UniProtKB-SubCell"/>
</dbReference>
<dbReference type="GO" id="GO:0036218">
    <property type="term" value="F:dTTP diphosphatase activity"/>
    <property type="evidence" value="ECO:0007669"/>
    <property type="project" value="RHEA"/>
</dbReference>
<dbReference type="GO" id="GO:0036221">
    <property type="term" value="F:UTP diphosphatase activity"/>
    <property type="evidence" value="ECO:0007669"/>
    <property type="project" value="RHEA"/>
</dbReference>
<dbReference type="GO" id="GO:0009117">
    <property type="term" value="P:nucleotide metabolic process"/>
    <property type="evidence" value="ECO:0007669"/>
    <property type="project" value="UniProtKB-KW"/>
</dbReference>
<dbReference type="CDD" id="cd00555">
    <property type="entry name" value="Maf"/>
    <property type="match status" value="1"/>
</dbReference>
<dbReference type="Gene3D" id="3.90.950.10">
    <property type="match status" value="1"/>
</dbReference>
<dbReference type="HAMAP" id="MF_00528">
    <property type="entry name" value="Maf"/>
    <property type="match status" value="1"/>
</dbReference>
<dbReference type="InterPro" id="IPR029001">
    <property type="entry name" value="ITPase-like_fam"/>
</dbReference>
<dbReference type="InterPro" id="IPR003697">
    <property type="entry name" value="Maf-like"/>
</dbReference>
<dbReference type="NCBIfam" id="TIGR00172">
    <property type="entry name" value="maf"/>
    <property type="match status" value="1"/>
</dbReference>
<dbReference type="PANTHER" id="PTHR43213">
    <property type="entry name" value="BIFUNCTIONAL DTTP/UTP PYROPHOSPHATASE/METHYLTRANSFERASE PROTEIN-RELATED"/>
    <property type="match status" value="1"/>
</dbReference>
<dbReference type="PANTHER" id="PTHR43213:SF5">
    <property type="entry name" value="BIFUNCTIONAL DTTP_UTP PYROPHOSPHATASE_METHYLTRANSFERASE PROTEIN-RELATED"/>
    <property type="match status" value="1"/>
</dbReference>
<dbReference type="Pfam" id="PF02545">
    <property type="entry name" value="Maf"/>
    <property type="match status" value="1"/>
</dbReference>
<dbReference type="PIRSF" id="PIRSF006305">
    <property type="entry name" value="Maf"/>
    <property type="match status" value="1"/>
</dbReference>
<dbReference type="SUPFAM" id="SSF52972">
    <property type="entry name" value="ITPase-like"/>
    <property type="match status" value="1"/>
</dbReference>
<organism>
    <name type="scientific">Staphylothermus marinus (strain ATCC 43588 / DSM 3639 / JCM 9404 / F1)</name>
    <dbReference type="NCBI Taxonomy" id="399550"/>
    <lineage>
        <taxon>Archaea</taxon>
        <taxon>Thermoproteota</taxon>
        <taxon>Thermoprotei</taxon>
        <taxon>Desulfurococcales</taxon>
        <taxon>Desulfurococcaceae</taxon>
        <taxon>Staphylothermus</taxon>
    </lineage>
</organism>
<keyword id="KW-0963">Cytoplasm</keyword>
<keyword id="KW-0378">Hydrolase</keyword>
<keyword id="KW-0546">Nucleotide metabolism</keyword>
<keyword id="KW-1185">Reference proteome</keyword>
<comment type="function">
    <text evidence="1">Nucleoside triphosphate pyrophosphatase that hydrolyzes dTTP and UTP. May have a dual role in cell division arrest and in preventing the incorporation of modified nucleotides into cellular nucleic acids.</text>
</comment>
<comment type="catalytic activity">
    <reaction evidence="1">
        <text>dTTP + H2O = dTMP + diphosphate + H(+)</text>
        <dbReference type="Rhea" id="RHEA:28534"/>
        <dbReference type="ChEBI" id="CHEBI:15377"/>
        <dbReference type="ChEBI" id="CHEBI:15378"/>
        <dbReference type="ChEBI" id="CHEBI:33019"/>
        <dbReference type="ChEBI" id="CHEBI:37568"/>
        <dbReference type="ChEBI" id="CHEBI:63528"/>
        <dbReference type="EC" id="3.6.1.9"/>
    </reaction>
</comment>
<comment type="catalytic activity">
    <reaction evidence="1">
        <text>UTP + H2O = UMP + diphosphate + H(+)</text>
        <dbReference type="Rhea" id="RHEA:29395"/>
        <dbReference type="ChEBI" id="CHEBI:15377"/>
        <dbReference type="ChEBI" id="CHEBI:15378"/>
        <dbReference type="ChEBI" id="CHEBI:33019"/>
        <dbReference type="ChEBI" id="CHEBI:46398"/>
        <dbReference type="ChEBI" id="CHEBI:57865"/>
        <dbReference type="EC" id="3.6.1.9"/>
    </reaction>
</comment>
<comment type="cofactor">
    <cofactor evidence="1">
        <name>a divalent metal cation</name>
        <dbReference type="ChEBI" id="CHEBI:60240"/>
    </cofactor>
</comment>
<comment type="subcellular location">
    <subcellularLocation>
        <location evidence="1">Cytoplasm</location>
    </subcellularLocation>
</comment>
<comment type="similarity">
    <text evidence="1">Belongs to the Maf family. YhdE subfamily.</text>
</comment>
<gene>
    <name type="ordered locus">Smar_0734</name>
</gene>
<protein>
    <recommendedName>
        <fullName evidence="1">dTTP/UTP pyrophosphatase</fullName>
        <shortName evidence="1">dTTPase/UTPase</shortName>
        <ecNumber evidence="1">3.6.1.9</ecNumber>
    </recommendedName>
    <alternativeName>
        <fullName evidence="1">Nucleoside triphosphate pyrophosphatase</fullName>
    </alternativeName>
    <alternativeName>
        <fullName evidence="1">Nucleotide pyrophosphatase</fullName>
        <shortName evidence="1">Nucleotide PPase</shortName>
    </alternativeName>
</protein>